<accession>Q8NGT0</accession>
<accession>Q6IFL2</accession>
<protein>
    <recommendedName>
        <fullName>Olfactory receptor 13C9</fullName>
    </recommendedName>
    <alternativeName>
        <fullName>Olfactory receptor OR9-13</fullName>
    </alternativeName>
</protein>
<proteinExistence type="inferred from homology"/>
<feature type="chain" id="PRO_0000150736" description="Olfactory receptor 13C9">
    <location>
        <begin position="1"/>
        <end position="318"/>
    </location>
</feature>
<feature type="topological domain" description="Extracellular" evidence="1">
    <location>
        <begin position="1"/>
        <end position="25"/>
    </location>
</feature>
<feature type="transmembrane region" description="Helical; Name=1" evidence="1">
    <location>
        <begin position="26"/>
        <end position="46"/>
    </location>
</feature>
<feature type="topological domain" description="Cytoplasmic" evidence="1">
    <location>
        <begin position="47"/>
        <end position="54"/>
    </location>
</feature>
<feature type="transmembrane region" description="Helical; Name=2" evidence="1">
    <location>
        <begin position="55"/>
        <end position="75"/>
    </location>
</feature>
<feature type="topological domain" description="Extracellular" evidence="1">
    <location>
        <begin position="76"/>
        <end position="99"/>
    </location>
</feature>
<feature type="transmembrane region" description="Helical; Name=3" evidence="1">
    <location>
        <begin position="100"/>
        <end position="120"/>
    </location>
</feature>
<feature type="topological domain" description="Cytoplasmic" evidence="1">
    <location>
        <begin position="121"/>
        <end position="139"/>
    </location>
</feature>
<feature type="transmembrane region" description="Helical; Name=4" evidence="1">
    <location>
        <begin position="140"/>
        <end position="160"/>
    </location>
</feature>
<feature type="topological domain" description="Extracellular" evidence="1">
    <location>
        <begin position="161"/>
        <end position="197"/>
    </location>
</feature>
<feature type="transmembrane region" description="Helical; Name=5" evidence="1">
    <location>
        <begin position="198"/>
        <end position="217"/>
    </location>
</feature>
<feature type="topological domain" description="Cytoplasmic" evidence="1">
    <location>
        <begin position="218"/>
        <end position="237"/>
    </location>
</feature>
<feature type="transmembrane region" description="Helical; Name=6" evidence="1">
    <location>
        <begin position="238"/>
        <end position="258"/>
    </location>
</feature>
<feature type="topological domain" description="Extracellular" evidence="1">
    <location>
        <begin position="259"/>
        <end position="277"/>
    </location>
</feature>
<feature type="transmembrane region" description="Helical; Name=7" evidence="1">
    <location>
        <begin position="278"/>
        <end position="298"/>
    </location>
</feature>
<feature type="topological domain" description="Cytoplasmic" evidence="1">
    <location>
        <begin position="299"/>
        <end position="318"/>
    </location>
</feature>
<feature type="glycosylation site" description="N-linked (GlcNAc...) asparagine" evidence="1">
    <location>
        <position position="5"/>
    </location>
</feature>
<feature type="disulfide bond" evidence="2">
    <location>
        <begin position="97"/>
        <end position="189"/>
    </location>
</feature>
<feature type="sequence variant" id="VAR_024136" description="In dbSNP:rs2900373.">
    <original>E</original>
    <variation>D</variation>
    <location>
        <position position="24"/>
    </location>
</feature>
<feature type="sequence variant" id="VAR_034308" description="In dbSNP:rs993658.">
    <original>T</original>
    <variation>S</variation>
    <location>
        <position position="91"/>
    </location>
</feature>
<feature type="sequence variant" id="VAR_053301" description="In dbSNP:rs10761054.">
    <original>F</original>
    <variation>L</variation>
    <location>
        <position position="197"/>
    </location>
</feature>
<organism>
    <name type="scientific">Homo sapiens</name>
    <name type="common">Human</name>
    <dbReference type="NCBI Taxonomy" id="9606"/>
    <lineage>
        <taxon>Eukaryota</taxon>
        <taxon>Metazoa</taxon>
        <taxon>Chordata</taxon>
        <taxon>Craniata</taxon>
        <taxon>Vertebrata</taxon>
        <taxon>Euteleostomi</taxon>
        <taxon>Mammalia</taxon>
        <taxon>Eutheria</taxon>
        <taxon>Euarchontoglires</taxon>
        <taxon>Primates</taxon>
        <taxon>Haplorrhini</taxon>
        <taxon>Catarrhini</taxon>
        <taxon>Hominidae</taxon>
        <taxon>Homo</taxon>
    </lineage>
</organism>
<keyword id="KW-1003">Cell membrane</keyword>
<keyword id="KW-1015">Disulfide bond</keyword>
<keyword id="KW-0297">G-protein coupled receptor</keyword>
<keyword id="KW-0325">Glycoprotein</keyword>
<keyword id="KW-0472">Membrane</keyword>
<keyword id="KW-0552">Olfaction</keyword>
<keyword id="KW-0675">Receptor</keyword>
<keyword id="KW-1185">Reference proteome</keyword>
<keyword id="KW-0716">Sensory transduction</keyword>
<keyword id="KW-0807">Transducer</keyword>
<keyword id="KW-0812">Transmembrane</keyword>
<keyword id="KW-1133">Transmembrane helix</keyword>
<evidence type="ECO:0000255" key="1"/>
<evidence type="ECO:0000255" key="2">
    <source>
        <dbReference type="PROSITE-ProRule" id="PRU00521"/>
    </source>
</evidence>
<evidence type="ECO:0000305" key="3"/>
<dbReference type="EMBL" id="AB065708">
    <property type="protein sequence ID" value="BAC05930.1"/>
    <property type="molecule type" value="Genomic_DNA"/>
</dbReference>
<dbReference type="EMBL" id="AL359846">
    <property type="status" value="NOT_ANNOTATED_CDS"/>
    <property type="molecule type" value="Genomic_DNA"/>
</dbReference>
<dbReference type="EMBL" id="CH471105">
    <property type="protein sequence ID" value="EAW58988.1"/>
    <property type="molecule type" value="Genomic_DNA"/>
</dbReference>
<dbReference type="EMBL" id="BK004250">
    <property type="protein sequence ID" value="DAA04648.1"/>
    <property type="molecule type" value="Genomic_DNA"/>
</dbReference>
<dbReference type="CCDS" id="CCDS35093.1"/>
<dbReference type="RefSeq" id="NP_001001956.1">
    <property type="nucleotide sequence ID" value="NM_001001956.1"/>
</dbReference>
<dbReference type="SMR" id="Q8NGT0"/>
<dbReference type="FunCoup" id="Q8NGT0">
    <property type="interactions" value="416"/>
</dbReference>
<dbReference type="STRING" id="9606.ENSP00000259362"/>
<dbReference type="GlyCosmos" id="Q8NGT0">
    <property type="glycosylation" value="1 site, No reported glycans"/>
</dbReference>
<dbReference type="GlyGen" id="Q8NGT0">
    <property type="glycosylation" value="1 site"/>
</dbReference>
<dbReference type="BioMuta" id="OR13C9"/>
<dbReference type="DMDM" id="38372767"/>
<dbReference type="PaxDb" id="9606-ENSP00000259362"/>
<dbReference type="Antibodypedia" id="14742">
    <property type="antibodies" value="53 antibodies from 16 providers"/>
</dbReference>
<dbReference type="DNASU" id="286362"/>
<dbReference type="Ensembl" id="ENST00000259362.1">
    <property type="protein sequence ID" value="ENSP00000259362.1"/>
    <property type="gene ID" value="ENSG00000136839.1"/>
</dbReference>
<dbReference type="GeneID" id="286362"/>
<dbReference type="KEGG" id="hsa:286362"/>
<dbReference type="MANE-Select" id="ENST00000259362.1">
    <property type="protein sequence ID" value="ENSP00000259362.1"/>
    <property type="RefSeq nucleotide sequence ID" value="NM_001001956.1"/>
    <property type="RefSeq protein sequence ID" value="NP_001001956.1"/>
</dbReference>
<dbReference type="UCSC" id="uc011lvr.2">
    <property type="organism name" value="human"/>
</dbReference>
<dbReference type="AGR" id="HGNC:15104"/>
<dbReference type="CTD" id="286362"/>
<dbReference type="GeneCards" id="OR13C9"/>
<dbReference type="HGNC" id="HGNC:15104">
    <property type="gene designation" value="OR13C9"/>
</dbReference>
<dbReference type="HPA" id="ENSG00000136839">
    <property type="expression patterns" value="Not detected"/>
</dbReference>
<dbReference type="neXtProt" id="NX_Q8NGT0"/>
<dbReference type="PharmGKB" id="PA32039"/>
<dbReference type="VEuPathDB" id="HostDB:ENSG00000136839"/>
<dbReference type="eggNOG" id="ENOG502T9K1">
    <property type="taxonomic scope" value="Eukaryota"/>
</dbReference>
<dbReference type="GeneTree" id="ENSGT01040000240406"/>
<dbReference type="HOGENOM" id="CLU_012526_1_2_1"/>
<dbReference type="InParanoid" id="Q8NGT0"/>
<dbReference type="OMA" id="WVAGVIN"/>
<dbReference type="OrthoDB" id="6144223at2759"/>
<dbReference type="PAN-GO" id="Q8NGT0">
    <property type="GO annotations" value="0 GO annotations based on evolutionary models"/>
</dbReference>
<dbReference type="PhylomeDB" id="Q8NGT0"/>
<dbReference type="TreeFam" id="TF352686"/>
<dbReference type="PathwayCommons" id="Q8NGT0"/>
<dbReference type="Reactome" id="R-HSA-9752946">
    <property type="pathway name" value="Expression and translocation of olfactory receptors"/>
</dbReference>
<dbReference type="BioGRID-ORCS" id="286362">
    <property type="hits" value="7 hits in 699 CRISPR screens"/>
</dbReference>
<dbReference type="GeneWiki" id="OR13C9"/>
<dbReference type="GenomeRNAi" id="286362"/>
<dbReference type="Pharos" id="Q8NGT0">
    <property type="development level" value="Tdark"/>
</dbReference>
<dbReference type="PRO" id="PR:Q8NGT0"/>
<dbReference type="Proteomes" id="UP000005640">
    <property type="component" value="Chromosome 9"/>
</dbReference>
<dbReference type="RNAct" id="Q8NGT0">
    <property type="molecule type" value="protein"/>
</dbReference>
<dbReference type="Bgee" id="ENSG00000136839">
    <property type="expression patterns" value="Expressed in male germ line stem cell (sensu Vertebrata) in testis and 2 other cell types or tissues"/>
</dbReference>
<dbReference type="GO" id="GO:0005654">
    <property type="term" value="C:nucleoplasm"/>
    <property type="evidence" value="ECO:0000314"/>
    <property type="project" value="HPA"/>
</dbReference>
<dbReference type="GO" id="GO:0005886">
    <property type="term" value="C:plasma membrane"/>
    <property type="evidence" value="ECO:0000314"/>
    <property type="project" value="HPA"/>
</dbReference>
<dbReference type="GO" id="GO:0004930">
    <property type="term" value="F:G protein-coupled receptor activity"/>
    <property type="evidence" value="ECO:0007669"/>
    <property type="project" value="UniProtKB-KW"/>
</dbReference>
<dbReference type="GO" id="GO:0004984">
    <property type="term" value="F:olfactory receptor activity"/>
    <property type="evidence" value="ECO:0000318"/>
    <property type="project" value="GO_Central"/>
</dbReference>
<dbReference type="GO" id="GO:0050911">
    <property type="term" value="P:detection of chemical stimulus involved in sensory perception of smell"/>
    <property type="evidence" value="ECO:0000318"/>
    <property type="project" value="GO_Central"/>
</dbReference>
<dbReference type="CDD" id="cd15430">
    <property type="entry name" value="7tmA_OR13-like"/>
    <property type="match status" value="1"/>
</dbReference>
<dbReference type="FunFam" id="1.10.1220.70:FF:000001">
    <property type="entry name" value="Olfactory receptor"/>
    <property type="match status" value="1"/>
</dbReference>
<dbReference type="FunFam" id="1.20.1070.10:FF:000501">
    <property type="entry name" value="Olfactory receptor"/>
    <property type="match status" value="1"/>
</dbReference>
<dbReference type="Gene3D" id="1.20.1070.10">
    <property type="entry name" value="Rhodopsin 7-helix transmembrane proteins"/>
    <property type="match status" value="1"/>
</dbReference>
<dbReference type="InterPro" id="IPR000276">
    <property type="entry name" value="GPCR_Rhodpsn"/>
</dbReference>
<dbReference type="InterPro" id="IPR017452">
    <property type="entry name" value="GPCR_Rhodpsn_7TM"/>
</dbReference>
<dbReference type="InterPro" id="IPR000725">
    <property type="entry name" value="Olfact_rcpt"/>
</dbReference>
<dbReference type="PANTHER" id="PTHR26453">
    <property type="entry name" value="OLFACTORY RECEPTOR"/>
    <property type="match status" value="1"/>
</dbReference>
<dbReference type="Pfam" id="PF13853">
    <property type="entry name" value="7tm_4"/>
    <property type="match status" value="1"/>
</dbReference>
<dbReference type="PRINTS" id="PR00237">
    <property type="entry name" value="GPCRRHODOPSN"/>
</dbReference>
<dbReference type="PRINTS" id="PR00245">
    <property type="entry name" value="OLFACTORYR"/>
</dbReference>
<dbReference type="SUPFAM" id="SSF81321">
    <property type="entry name" value="Family A G protein-coupled receptor-like"/>
    <property type="match status" value="1"/>
</dbReference>
<dbReference type="PROSITE" id="PS00237">
    <property type="entry name" value="G_PROTEIN_RECEP_F1_1"/>
    <property type="match status" value="1"/>
</dbReference>
<dbReference type="PROSITE" id="PS50262">
    <property type="entry name" value="G_PROTEIN_RECEP_F1_2"/>
    <property type="match status" value="1"/>
</dbReference>
<gene>
    <name type="primary">OR13C9</name>
</gene>
<name>O13C9_HUMAN</name>
<comment type="function">
    <text evidence="3">Odorant receptor.</text>
</comment>
<comment type="subcellular location">
    <subcellularLocation>
        <location>Cell membrane</location>
        <topology>Multi-pass membrane protein</topology>
    </subcellularLocation>
</comment>
<comment type="similarity">
    <text evidence="2">Belongs to the G-protein coupled receptor 1 family.</text>
</comment>
<comment type="online information" name="Human Olfactory Receptor Data Exploratorium (HORDE)">
    <link uri="http://genome.weizmann.ac.il/horde/card/index/symbol:OR13C9"/>
</comment>
<reference key="1">
    <citation type="submission" date="2001-07" db="EMBL/GenBank/DDBJ databases">
        <title>Genome-wide discovery and analysis of human seven transmembrane helix receptor genes.</title>
        <authorList>
            <person name="Suwa M."/>
            <person name="Sato T."/>
            <person name="Okouchi I."/>
            <person name="Arita M."/>
            <person name="Futami K."/>
            <person name="Matsumoto S."/>
            <person name="Tsutsumi S."/>
            <person name="Aburatani H."/>
            <person name="Asai K."/>
            <person name="Akiyama Y."/>
        </authorList>
    </citation>
    <scope>NUCLEOTIDE SEQUENCE [GENOMIC DNA]</scope>
</reference>
<reference key="2">
    <citation type="journal article" date="2004" name="Nature">
        <title>DNA sequence and analysis of human chromosome 9.</title>
        <authorList>
            <person name="Humphray S.J."/>
            <person name="Oliver K."/>
            <person name="Hunt A.R."/>
            <person name="Plumb R.W."/>
            <person name="Loveland J.E."/>
            <person name="Howe K.L."/>
            <person name="Andrews T.D."/>
            <person name="Searle S."/>
            <person name="Hunt S.E."/>
            <person name="Scott C.E."/>
            <person name="Jones M.C."/>
            <person name="Ainscough R."/>
            <person name="Almeida J.P."/>
            <person name="Ambrose K.D."/>
            <person name="Ashwell R.I.S."/>
            <person name="Babbage A.K."/>
            <person name="Babbage S."/>
            <person name="Bagguley C.L."/>
            <person name="Bailey J."/>
            <person name="Banerjee R."/>
            <person name="Barker D.J."/>
            <person name="Barlow K.F."/>
            <person name="Bates K."/>
            <person name="Beasley H."/>
            <person name="Beasley O."/>
            <person name="Bird C.P."/>
            <person name="Bray-Allen S."/>
            <person name="Brown A.J."/>
            <person name="Brown J.Y."/>
            <person name="Burford D."/>
            <person name="Burrill W."/>
            <person name="Burton J."/>
            <person name="Carder C."/>
            <person name="Carter N.P."/>
            <person name="Chapman J.C."/>
            <person name="Chen Y."/>
            <person name="Clarke G."/>
            <person name="Clark S.Y."/>
            <person name="Clee C.M."/>
            <person name="Clegg S."/>
            <person name="Collier R.E."/>
            <person name="Corby N."/>
            <person name="Crosier M."/>
            <person name="Cummings A.T."/>
            <person name="Davies J."/>
            <person name="Dhami P."/>
            <person name="Dunn M."/>
            <person name="Dutta I."/>
            <person name="Dyer L.W."/>
            <person name="Earthrowl M.E."/>
            <person name="Faulkner L."/>
            <person name="Fleming C.J."/>
            <person name="Frankish A."/>
            <person name="Frankland J.A."/>
            <person name="French L."/>
            <person name="Fricker D.G."/>
            <person name="Garner P."/>
            <person name="Garnett J."/>
            <person name="Ghori J."/>
            <person name="Gilbert J.G.R."/>
            <person name="Glison C."/>
            <person name="Grafham D.V."/>
            <person name="Gribble S."/>
            <person name="Griffiths C."/>
            <person name="Griffiths-Jones S."/>
            <person name="Grocock R."/>
            <person name="Guy J."/>
            <person name="Hall R.E."/>
            <person name="Hammond S."/>
            <person name="Harley J.L."/>
            <person name="Harrison E.S.I."/>
            <person name="Hart E.A."/>
            <person name="Heath P.D."/>
            <person name="Henderson C.D."/>
            <person name="Hopkins B.L."/>
            <person name="Howard P.J."/>
            <person name="Howden P.J."/>
            <person name="Huckle E."/>
            <person name="Johnson C."/>
            <person name="Johnson D."/>
            <person name="Joy A.A."/>
            <person name="Kay M."/>
            <person name="Keenan S."/>
            <person name="Kershaw J.K."/>
            <person name="Kimberley A.M."/>
            <person name="King A."/>
            <person name="Knights A."/>
            <person name="Laird G.K."/>
            <person name="Langford C."/>
            <person name="Lawlor S."/>
            <person name="Leongamornlert D.A."/>
            <person name="Leversha M."/>
            <person name="Lloyd C."/>
            <person name="Lloyd D.M."/>
            <person name="Lovell J."/>
            <person name="Martin S."/>
            <person name="Mashreghi-Mohammadi M."/>
            <person name="Matthews L."/>
            <person name="McLaren S."/>
            <person name="McLay K.E."/>
            <person name="McMurray A."/>
            <person name="Milne S."/>
            <person name="Nickerson T."/>
            <person name="Nisbett J."/>
            <person name="Nordsiek G."/>
            <person name="Pearce A.V."/>
            <person name="Peck A.I."/>
            <person name="Porter K.M."/>
            <person name="Pandian R."/>
            <person name="Pelan S."/>
            <person name="Phillimore B."/>
            <person name="Povey S."/>
            <person name="Ramsey Y."/>
            <person name="Rand V."/>
            <person name="Scharfe M."/>
            <person name="Sehra H.K."/>
            <person name="Shownkeen R."/>
            <person name="Sims S.K."/>
            <person name="Skuce C.D."/>
            <person name="Smith M."/>
            <person name="Steward C.A."/>
            <person name="Swarbreck D."/>
            <person name="Sycamore N."/>
            <person name="Tester J."/>
            <person name="Thorpe A."/>
            <person name="Tracey A."/>
            <person name="Tromans A."/>
            <person name="Thomas D.W."/>
            <person name="Wall M."/>
            <person name="Wallis J.M."/>
            <person name="West A.P."/>
            <person name="Whitehead S.L."/>
            <person name="Willey D.L."/>
            <person name="Williams S.A."/>
            <person name="Wilming L."/>
            <person name="Wray P.W."/>
            <person name="Young L."/>
            <person name="Ashurst J.L."/>
            <person name="Coulson A."/>
            <person name="Blocker H."/>
            <person name="Durbin R.M."/>
            <person name="Sulston J.E."/>
            <person name="Hubbard T."/>
            <person name="Jackson M.J."/>
            <person name="Bentley D.R."/>
            <person name="Beck S."/>
            <person name="Rogers J."/>
            <person name="Dunham I."/>
        </authorList>
    </citation>
    <scope>NUCLEOTIDE SEQUENCE [LARGE SCALE GENOMIC DNA]</scope>
</reference>
<reference key="3">
    <citation type="submission" date="2005-07" db="EMBL/GenBank/DDBJ databases">
        <authorList>
            <person name="Mural R.J."/>
            <person name="Istrail S."/>
            <person name="Sutton G.G."/>
            <person name="Florea L."/>
            <person name="Halpern A.L."/>
            <person name="Mobarry C.M."/>
            <person name="Lippert R."/>
            <person name="Walenz B."/>
            <person name="Shatkay H."/>
            <person name="Dew I."/>
            <person name="Miller J.R."/>
            <person name="Flanigan M.J."/>
            <person name="Edwards N.J."/>
            <person name="Bolanos R."/>
            <person name="Fasulo D."/>
            <person name="Halldorsson B.V."/>
            <person name="Hannenhalli S."/>
            <person name="Turner R."/>
            <person name="Yooseph S."/>
            <person name="Lu F."/>
            <person name="Nusskern D.R."/>
            <person name="Shue B.C."/>
            <person name="Zheng X.H."/>
            <person name="Zhong F."/>
            <person name="Delcher A.L."/>
            <person name="Huson D.H."/>
            <person name="Kravitz S.A."/>
            <person name="Mouchard L."/>
            <person name="Reinert K."/>
            <person name="Remington K.A."/>
            <person name="Clark A.G."/>
            <person name="Waterman M.S."/>
            <person name="Eichler E.E."/>
            <person name="Adams M.D."/>
            <person name="Hunkapiller M.W."/>
            <person name="Myers E.W."/>
            <person name="Venter J.C."/>
        </authorList>
    </citation>
    <scope>NUCLEOTIDE SEQUENCE [LARGE SCALE GENOMIC DNA]</scope>
</reference>
<reference key="4">
    <citation type="journal article" date="2004" name="Proc. Natl. Acad. Sci. U.S.A.">
        <title>The human olfactory receptor gene family.</title>
        <authorList>
            <person name="Malnic B."/>
            <person name="Godfrey P.A."/>
            <person name="Buck L.B."/>
        </authorList>
    </citation>
    <scope>IDENTIFICATION</scope>
</reference>
<reference key="5">
    <citation type="journal article" date="2004" name="Proc. Natl. Acad. Sci. U.S.A.">
        <authorList>
            <person name="Malnic B."/>
            <person name="Godfrey P.A."/>
            <person name="Buck L.B."/>
        </authorList>
    </citation>
    <scope>ERRATUM OF PUBMED:14983052</scope>
</reference>
<sequence>MEWENQTILVEFFLKGHSVHPRLELLFFVLIFIMYVVILLGNGTLILISILDPHLHTPMYFFLGNLSFLDICYTTTSIPSTLVSFLSERKTISFSGCAVQMFLGLAMGTTECVLLGMMAFDRYVAICNPLRYPIIMSKNAYVPMAVGSWFAGIVNSAVQTTFVVQLPFCRKNVINHFSCEILAVMKLACADISGNEFLMLVATILFTLMPLLLIVISYSLIISSILKIHSSEGRSKAFSTCSAHLTVVIIFYGTILFMYMKPKSKETLNSDDLDATDKIISMFYGVMTPMMNPLIYSLRNKDVKEAVKHLPNRRFFSK</sequence>